<gene>
    <name evidence="20 24" type="primary">ATG4A</name>
    <name evidence="17" type="synonym">APG4A</name>
    <name evidence="24" type="synonym">AUTL2</name>
</gene>
<comment type="function">
    <text evidence="4 5 6 7 8 9 11 12 13 14 15">Cysteine protease that plays a key role in autophagy by mediating both proteolytic activation and delipidation of ATG8 family proteins (PubMed:12473658, PubMed:15169837, PubMed:17347651, PubMed:21177865, PubMed:21245471, PubMed:22302004, PubMed:32732290). The protease activity is required for proteolytic activation of ATG8 family proteins: cleaves the C-terminal amino acid of ATG8 proteins to reveal a C-terminal glycine (PubMed:12473658, PubMed:15169837, PubMed:17347651, PubMed:21177865, PubMed:21245471, PubMed:22302004). Exposure of the glycine at the C-terminus is essential for ATG8 proteins conjugation to phosphatidylethanolamine (PE) and insertion to membranes, which is necessary for autophagy (PubMed:12473658, PubMed:15169837, PubMed:17347651, PubMed:21177865, PubMed:21245471, PubMed:22302004). Preferred substrate is GABARAPL2 followed by MAP1LC3A and GABARAP (PubMed:12473658, PubMed:15169837, PubMed:17347651, PubMed:21177865, PubMed:21245471, PubMed:22302004). Protease activity is also required to counteract formation of high-molecular weight conjugates of ATG8 proteins (ATG8ylation): acts as a deubiquitinating-like enzyme that removes ATG8 conjugated to other proteins, such as ATG3 (PubMed:31315929, PubMed:33773106). In addition to the protease activity, also mediates delipidation of ATG8 family proteins (PubMed:29458288, PubMed:33909989). Catalyzes delipidation of PE-conjugated forms of ATG8 proteins during macroautophagy (PubMed:29458288, PubMed:33909989). Compared to ATG4B, the major protein for proteolytic activation of ATG8 proteins, shows weaker ability to cleave the C-terminal amino acid of ATG8 proteins, while it displays stronger delipidation activity (PubMed:29458288). Involved in phagophore growth during mitophagy independently of its protease activity and of ATG8 proteins: acts by regulating ATG9A trafficking to mitochondria and promoting phagophore-endoplasmic reticulum contacts during the lipid transfer phase of mitophagy (PubMed:33773106).</text>
</comment>
<comment type="catalytic activity">
    <reaction evidence="11 15">
        <text>[protein]-C-terminal L-amino acid-glycyl-phosphatidylethanolamide + H2O = [protein]-C-terminal L-amino acid-glycine + a 1,2-diacyl-sn-glycero-3-phosphoethanolamine</text>
        <dbReference type="Rhea" id="RHEA:67548"/>
        <dbReference type="Rhea" id="RHEA-COMP:17323"/>
        <dbReference type="Rhea" id="RHEA-COMP:17324"/>
        <dbReference type="ChEBI" id="CHEBI:15377"/>
        <dbReference type="ChEBI" id="CHEBI:64612"/>
        <dbReference type="ChEBI" id="CHEBI:172940"/>
        <dbReference type="ChEBI" id="CHEBI:172941"/>
    </reaction>
    <physiologicalReaction direction="left-to-right" evidence="11 15">
        <dbReference type="Rhea" id="RHEA:67549"/>
    </physiologicalReaction>
</comment>
<comment type="activity regulation">
    <text evidence="4 6 7">Inhibited by N-ethylmaleimide (PubMed:12473658, PubMed:21177865). Redox-regulated during autophagy since reducing conditions activate ATG4A whereas an oxidizing environment such as the presence of H(2)O(2) inhibits its activity (PubMed:17347651).</text>
</comment>
<comment type="biophysicochemical properties">
    <kinetics>
        <KM evidence="7 9">33.9 uM for MAP1LC3B</KM>
        <KM evidence="7 9">20.8 uM for GABARAP</KM>
        <KM evidence="7 9">36.7 uM for GABARAPL1</KM>
        <KM evidence="7 9">15.7 uM for GABARAPL2</KM>
    </kinetics>
</comment>
<comment type="subunit">
    <text evidence="14">Interacts with ATG9A; the interaction is direct.</text>
</comment>
<comment type="interaction">
    <interactant intactId="EBI-3044060">
        <id>Q8WYN0</id>
    </interactant>
    <interactant intactId="EBI-3919850">
        <id>Q8IVW4</id>
        <label>CDKL3</label>
    </interactant>
    <organismsDiffer>false</organismsDiffer>
    <experiments>3</experiments>
</comment>
<comment type="interaction">
    <interactant intactId="EBI-3044060">
        <id>Q8WYN0</id>
    </interactant>
    <interactant intactId="EBI-746969">
        <id>Q9H0R8</id>
        <label>GABARAPL1</label>
    </interactant>
    <organismsDiffer>false</organismsDiffer>
    <experiments>6</experiments>
</comment>
<comment type="subcellular location">
    <subcellularLocation>
        <location evidence="1">Cytoplasm</location>
    </subcellularLocation>
</comment>
<comment type="alternative products">
    <event type="alternative splicing"/>
    <isoform>
        <id>Q8WYN0-1</id>
        <name>1</name>
        <sequence type="displayed"/>
    </isoform>
    <isoform>
        <id>Q8WYN0-2</id>
        <name>2</name>
        <sequence type="described" ref="VSP_013025"/>
    </isoform>
    <isoform>
        <id>Q8WYN0-3</id>
        <name>3</name>
        <sequence type="described" ref="VSP_025902"/>
    </isoform>
    <isoform>
        <id>Q8WYN0-5</id>
        <name>4</name>
        <sequence type="described" ref="VSP_030499"/>
    </isoform>
</comment>
<comment type="domain">
    <text evidence="10 13">The LIR motif (LC3-interacting region) is required for the interaction with the ATG8 family proteins (PubMed:28287329). Required for proteolytic activation and delipidation of ATG8 proteins (PubMed:32732290).</text>
</comment>
<comment type="similarity">
    <text evidence="22">Belongs to the peptidase C54 family.</text>
</comment>
<comment type="caution">
    <text evidence="3 23">A paper describing ATG4D tissue expression has been retracted, due to concerns of image duplication in some of the figures.</text>
</comment>
<keyword id="KW-0002">3D-structure</keyword>
<keyword id="KW-0025">Alternative splicing</keyword>
<keyword id="KW-0072">Autophagy</keyword>
<keyword id="KW-0963">Cytoplasm</keyword>
<keyword id="KW-0378">Hydrolase</keyword>
<keyword id="KW-0443">Lipid metabolism</keyword>
<keyword id="KW-0645">Protease</keyword>
<keyword id="KW-0653">Protein transport</keyword>
<keyword id="KW-1267">Proteomics identification</keyword>
<keyword id="KW-1185">Reference proteome</keyword>
<keyword id="KW-0788">Thiol protease</keyword>
<keyword id="KW-0813">Transport</keyword>
<keyword id="KW-0833">Ubl conjugation pathway</keyword>
<accession>Q8WYN0</accession>
<accession>A6NCH2</accession>
<accession>B2RAZ7</accession>
<accession>D3DUY0</accession>
<accession>O95534</accession>
<accession>Q5JYY9</accession>
<accession>Q5JYZ0</accession>
<accession>Q86VE5</accession>
<accession>Q96KQ0</accession>
<accession>Q96KQ1</accession>
<organism>
    <name type="scientific">Homo sapiens</name>
    <name type="common">Human</name>
    <dbReference type="NCBI Taxonomy" id="9606"/>
    <lineage>
        <taxon>Eukaryota</taxon>
        <taxon>Metazoa</taxon>
        <taxon>Chordata</taxon>
        <taxon>Craniata</taxon>
        <taxon>Vertebrata</taxon>
        <taxon>Euteleostomi</taxon>
        <taxon>Mammalia</taxon>
        <taxon>Eutheria</taxon>
        <taxon>Euarchontoglires</taxon>
        <taxon>Primates</taxon>
        <taxon>Haplorrhini</taxon>
        <taxon>Catarrhini</taxon>
        <taxon>Hominidae</taxon>
        <taxon>Homo</taxon>
    </lineage>
</organism>
<evidence type="ECO:0000250" key="1">
    <source>
        <dbReference type="UniProtKB" id="Q8BGE6"/>
    </source>
</evidence>
<evidence type="ECO:0000250" key="2">
    <source>
        <dbReference type="UniProtKB" id="Q9Y4P1"/>
    </source>
</evidence>
<evidence type="ECO:0000269" key="3">
    <source>
    </source>
</evidence>
<evidence type="ECO:0000269" key="4">
    <source>
    </source>
</evidence>
<evidence type="ECO:0000269" key="5">
    <source>
    </source>
</evidence>
<evidence type="ECO:0000269" key="6">
    <source>
    </source>
</evidence>
<evidence type="ECO:0000269" key="7">
    <source>
    </source>
</evidence>
<evidence type="ECO:0000269" key="8">
    <source>
    </source>
</evidence>
<evidence type="ECO:0000269" key="9">
    <source>
    </source>
</evidence>
<evidence type="ECO:0000269" key="10">
    <source>
    </source>
</evidence>
<evidence type="ECO:0000269" key="11">
    <source>
    </source>
</evidence>
<evidence type="ECO:0000269" key="12">
    <source>
    </source>
</evidence>
<evidence type="ECO:0000269" key="13">
    <source>
    </source>
</evidence>
<evidence type="ECO:0000269" key="14">
    <source>
    </source>
</evidence>
<evidence type="ECO:0000269" key="15">
    <source>
    </source>
</evidence>
<evidence type="ECO:0000303" key="16">
    <source>
    </source>
</evidence>
<evidence type="ECO:0000303" key="17">
    <source>
    </source>
</evidence>
<evidence type="ECO:0000303" key="18">
    <source>
    </source>
</evidence>
<evidence type="ECO:0000303" key="19">
    <source>
    </source>
</evidence>
<evidence type="ECO:0000303" key="20">
    <source ref="20"/>
</evidence>
<evidence type="ECO:0000303" key="21">
    <source ref="4"/>
</evidence>
<evidence type="ECO:0000305" key="22"/>
<evidence type="ECO:0000305" key="23">
    <source>
    </source>
</evidence>
<evidence type="ECO:0000312" key="24">
    <source>
        <dbReference type="HGNC" id="HGNC:16489"/>
    </source>
</evidence>
<evidence type="ECO:0007829" key="25">
    <source>
        <dbReference type="PDB" id="2P82"/>
    </source>
</evidence>
<sequence length="398" mass="45378">MESVLSKYEDQITIFTDYLEEYPDTDELVWILGKQHLLKTEKSKLLSDISARLWFTYRRKFSPIGGTGPSSDAGWGCMLRCGQMMLAQALICRHLGRDWSWEKQKEQPKEYQRILQCFLDRKDCCYSIHQMAQMGVGEGKSIGEWFGPNTVAQVLKKLALFDEWNSLAVYVSMDNTVVIEDIKKMCRVLPLSADTAGDRPPDSLTASNQSKGTSAYCSAWKPLLLIVPLRLGINQINPVYVDAFKECFKMPQSLGALGGKPNNAYYFIGFLGDELIFLDPHTTQTFVDTEENGTVNDQTFHCLQSPQRMNILNLDPSVALGFFCKEEKDFDNWCSLVQKEILKENLRMFELVQKHPSHWPPFVPPAKPEVTTTGAEFIDSTEQLEEFDLEEDFEILSV</sequence>
<reference key="1">
    <citation type="journal article" date="2003" name="J. Biol. Chem.">
        <title>Human autophagins, a family of cysteine proteinases potentially implicated in cell degradation by autophagy.</title>
        <authorList>
            <person name="Marino G."/>
            <person name="Uria J.A."/>
            <person name="Puente X.S."/>
            <person name="Quesada V."/>
            <person name="Bordallo J."/>
            <person name="Lopez-Otin C."/>
        </authorList>
    </citation>
    <scope>RETRACTED PAPER</scope>
    <source>
        <tissue>Ovary</tissue>
    </source>
</reference>
<reference key="2">
    <citation type="journal article" date="2019" name="J. Biol. Chem.">
        <authorList>
            <person name="Marino G."/>
            <person name="Uria J.A."/>
            <person name="Puente X.S."/>
            <person name="Quesada V."/>
            <person name="Bordallo J."/>
            <person name="Lopez-Otin C."/>
        </authorList>
    </citation>
    <scope>RETRACTION NOTICE OF PUBMED:12446702</scope>
</reference>
<reference key="3">
    <citation type="journal article" date="2004" name="J. Cell Sci.">
        <title>LC3, GABARAP and GATE16 localize to autophagosomal membrane depending on form-II formation.</title>
        <authorList>
            <person name="Kabeya Y."/>
            <person name="Mizushima N."/>
            <person name="Yamamoto A."/>
            <person name="Oshitani-Okamoto S."/>
            <person name="Ohsumi Y."/>
            <person name="Yoshimori T."/>
        </authorList>
    </citation>
    <scope>NUCLEOTIDE SEQUENCE [MRNA] (ISOFORM 1)</scope>
    <scope>FUNCTION IN GABARAPL2; GABARAP AND MAP1LC3 CLEAVAGE</scope>
</reference>
<reference key="4">
    <citation type="submission" date="2001-09" db="EMBL/GenBank/DDBJ databases">
        <title>Cloning and sequencing of a second human homologue of the yeast Apg4 cysteine endopeptidase involved in autophagy.</title>
        <authorList>
            <person name="Chen J.M."/>
            <person name="Barrett A.J."/>
        </authorList>
    </citation>
    <scope>NUCLEOTIDE SEQUENCE [MRNA] (ISOFORMS 1 AND 2)</scope>
    <source>
        <tissue>Prostate</tissue>
        <tissue>Testis</tissue>
    </source>
</reference>
<reference key="5">
    <citation type="journal article" date="2004" name="Nat. Genet.">
        <title>Complete sequencing and characterization of 21,243 full-length human cDNAs.</title>
        <authorList>
            <person name="Ota T."/>
            <person name="Suzuki Y."/>
            <person name="Nishikawa T."/>
            <person name="Otsuki T."/>
            <person name="Sugiyama T."/>
            <person name="Irie R."/>
            <person name="Wakamatsu A."/>
            <person name="Hayashi K."/>
            <person name="Sato H."/>
            <person name="Nagai K."/>
            <person name="Kimura K."/>
            <person name="Makita H."/>
            <person name="Sekine M."/>
            <person name="Obayashi M."/>
            <person name="Nishi T."/>
            <person name="Shibahara T."/>
            <person name="Tanaka T."/>
            <person name="Ishii S."/>
            <person name="Yamamoto J."/>
            <person name="Saito K."/>
            <person name="Kawai Y."/>
            <person name="Isono Y."/>
            <person name="Nakamura Y."/>
            <person name="Nagahari K."/>
            <person name="Murakami K."/>
            <person name="Yasuda T."/>
            <person name="Iwayanagi T."/>
            <person name="Wagatsuma M."/>
            <person name="Shiratori A."/>
            <person name="Sudo H."/>
            <person name="Hosoiri T."/>
            <person name="Kaku Y."/>
            <person name="Kodaira H."/>
            <person name="Kondo H."/>
            <person name="Sugawara M."/>
            <person name="Takahashi M."/>
            <person name="Kanda K."/>
            <person name="Yokoi T."/>
            <person name="Furuya T."/>
            <person name="Kikkawa E."/>
            <person name="Omura Y."/>
            <person name="Abe K."/>
            <person name="Kamihara K."/>
            <person name="Katsuta N."/>
            <person name="Sato K."/>
            <person name="Tanikawa M."/>
            <person name="Yamazaki M."/>
            <person name="Ninomiya K."/>
            <person name="Ishibashi T."/>
            <person name="Yamashita H."/>
            <person name="Murakawa K."/>
            <person name="Fujimori K."/>
            <person name="Tanai H."/>
            <person name="Kimata M."/>
            <person name="Watanabe M."/>
            <person name="Hiraoka S."/>
            <person name="Chiba Y."/>
            <person name="Ishida S."/>
            <person name="Ono Y."/>
            <person name="Takiguchi S."/>
            <person name="Watanabe S."/>
            <person name="Yosida M."/>
            <person name="Hotuta T."/>
            <person name="Kusano J."/>
            <person name="Kanehori K."/>
            <person name="Takahashi-Fujii A."/>
            <person name="Hara H."/>
            <person name="Tanase T.-O."/>
            <person name="Nomura Y."/>
            <person name="Togiya S."/>
            <person name="Komai F."/>
            <person name="Hara R."/>
            <person name="Takeuchi K."/>
            <person name="Arita M."/>
            <person name="Imose N."/>
            <person name="Musashino K."/>
            <person name="Yuuki H."/>
            <person name="Oshima A."/>
            <person name="Sasaki N."/>
            <person name="Aotsuka S."/>
            <person name="Yoshikawa Y."/>
            <person name="Matsunawa H."/>
            <person name="Ichihara T."/>
            <person name="Shiohata N."/>
            <person name="Sano S."/>
            <person name="Moriya S."/>
            <person name="Momiyama H."/>
            <person name="Satoh N."/>
            <person name="Takami S."/>
            <person name="Terashima Y."/>
            <person name="Suzuki O."/>
            <person name="Nakagawa S."/>
            <person name="Senoh A."/>
            <person name="Mizoguchi H."/>
            <person name="Goto Y."/>
            <person name="Shimizu F."/>
            <person name="Wakebe H."/>
            <person name="Hishigaki H."/>
            <person name="Watanabe T."/>
            <person name="Sugiyama A."/>
            <person name="Takemoto M."/>
            <person name="Kawakami B."/>
            <person name="Yamazaki M."/>
            <person name="Watanabe K."/>
            <person name="Kumagai A."/>
            <person name="Itakura S."/>
            <person name="Fukuzumi Y."/>
            <person name="Fujimori Y."/>
            <person name="Komiyama M."/>
            <person name="Tashiro H."/>
            <person name="Tanigami A."/>
            <person name="Fujiwara T."/>
            <person name="Ono T."/>
            <person name="Yamada K."/>
            <person name="Fujii Y."/>
            <person name="Ozaki K."/>
            <person name="Hirao M."/>
            <person name="Ohmori Y."/>
            <person name="Kawabata A."/>
            <person name="Hikiji T."/>
            <person name="Kobatake N."/>
            <person name="Inagaki H."/>
            <person name="Ikema Y."/>
            <person name="Okamoto S."/>
            <person name="Okitani R."/>
            <person name="Kawakami T."/>
            <person name="Noguchi S."/>
            <person name="Itoh T."/>
            <person name="Shigeta K."/>
            <person name="Senba T."/>
            <person name="Matsumura K."/>
            <person name="Nakajima Y."/>
            <person name="Mizuno T."/>
            <person name="Morinaga M."/>
            <person name="Sasaki M."/>
            <person name="Togashi T."/>
            <person name="Oyama M."/>
            <person name="Hata H."/>
            <person name="Watanabe M."/>
            <person name="Komatsu T."/>
            <person name="Mizushima-Sugano J."/>
            <person name="Satoh T."/>
            <person name="Shirai Y."/>
            <person name="Takahashi Y."/>
            <person name="Nakagawa K."/>
            <person name="Okumura K."/>
            <person name="Nagase T."/>
            <person name="Nomura N."/>
            <person name="Kikuchi H."/>
            <person name="Masuho Y."/>
            <person name="Yamashita R."/>
            <person name="Nakai K."/>
            <person name="Yada T."/>
            <person name="Nakamura Y."/>
            <person name="Ohara O."/>
            <person name="Isogai T."/>
            <person name="Sugano S."/>
        </authorList>
    </citation>
    <scope>NUCLEOTIDE SEQUENCE [LARGE SCALE MRNA] (ISOFORM 1)</scope>
</reference>
<reference key="6">
    <citation type="journal article" date="2005" name="Nature">
        <title>The DNA sequence of the human X chromosome.</title>
        <authorList>
            <person name="Ross M.T."/>
            <person name="Grafham D.V."/>
            <person name="Coffey A.J."/>
            <person name="Scherer S."/>
            <person name="McLay K."/>
            <person name="Muzny D."/>
            <person name="Platzer M."/>
            <person name="Howell G.R."/>
            <person name="Burrows C."/>
            <person name="Bird C.P."/>
            <person name="Frankish A."/>
            <person name="Lovell F.L."/>
            <person name="Howe K.L."/>
            <person name="Ashurst J.L."/>
            <person name="Fulton R.S."/>
            <person name="Sudbrak R."/>
            <person name="Wen G."/>
            <person name="Jones M.C."/>
            <person name="Hurles M.E."/>
            <person name="Andrews T.D."/>
            <person name="Scott C.E."/>
            <person name="Searle S."/>
            <person name="Ramser J."/>
            <person name="Whittaker A."/>
            <person name="Deadman R."/>
            <person name="Carter N.P."/>
            <person name="Hunt S.E."/>
            <person name="Chen R."/>
            <person name="Cree A."/>
            <person name="Gunaratne P."/>
            <person name="Havlak P."/>
            <person name="Hodgson A."/>
            <person name="Metzker M.L."/>
            <person name="Richards S."/>
            <person name="Scott G."/>
            <person name="Steffen D."/>
            <person name="Sodergren E."/>
            <person name="Wheeler D.A."/>
            <person name="Worley K.C."/>
            <person name="Ainscough R."/>
            <person name="Ambrose K.D."/>
            <person name="Ansari-Lari M.A."/>
            <person name="Aradhya S."/>
            <person name="Ashwell R.I."/>
            <person name="Babbage A.K."/>
            <person name="Bagguley C.L."/>
            <person name="Ballabio A."/>
            <person name="Banerjee R."/>
            <person name="Barker G.E."/>
            <person name="Barlow K.F."/>
            <person name="Barrett I.P."/>
            <person name="Bates K.N."/>
            <person name="Beare D.M."/>
            <person name="Beasley H."/>
            <person name="Beasley O."/>
            <person name="Beck A."/>
            <person name="Bethel G."/>
            <person name="Blechschmidt K."/>
            <person name="Brady N."/>
            <person name="Bray-Allen S."/>
            <person name="Bridgeman A.M."/>
            <person name="Brown A.J."/>
            <person name="Brown M.J."/>
            <person name="Bonnin D."/>
            <person name="Bruford E.A."/>
            <person name="Buhay C."/>
            <person name="Burch P."/>
            <person name="Burford D."/>
            <person name="Burgess J."/>
            <person name="Burrill W."/>
            <person name="Burton J."/>
            <person name="Bye J.M."/>
            <person name="Carder C."/>
            <person name="Carrel L."/>
            <person name="Chako J."/>
            <person name="Chapman J.C."/>
            <person name="Chavez D."/>
            <person name="Chen E."/>
            <person name="Chen G."/>
            <person name="Chen Y."/>
            <person name="Chen Z."/>
            <person name="Chinault C."/>
            <person name="Ciccodicola A."/>
            <person name="Clark S.Y."/>
            <person name="Clarke G."/>
            <person name="Clee C.M."/>
            <person name="Clegg S."/>
            <person name="Clerc-Blankenburg K."/>
            <person name="Clifford K."/>
            <person name="Cobley V."/>
            <person name="Cole C.G."/>
            <person name="Conquer J.S."/>
            <person name="Corby N."/>
            <person name="Connor R.E."/>
            <person name="David R."/>
            <person name="Davies J."/>
            <person name="Davis C."/>
            <person name="Davis J."/>
            <person name="Delgado O."/>
            <person name="Deshazo D."/>
            <person name="Dhami P."/>
            <person name="Ding Y."/>
            <person name="Dinh H."/>
            <person name="Dodsworth S."/>
            <person name="Draper H."/>
            <person name="Dugan-Rocha S."/>
            <person name="Dunham A."/>
            <person name="Dunn M."/>
            <person name="Durbin K.J."/>
            <person name="Dutta I."/>
            <person name="Eades T."/>
            <person name="Ellwood M."/>
            <person name="Emery-Cohen A."/>
            <person name="Errington H."/>
            <person name="Evans K.L."/>
            <person name="Faulkner L."/>
            <person name="Francis F."/>
            <person name="Frankland J."/>
            <person name="Fraser A.E."/>
            <person name="Galgoczy P."/>
            <person name="Gilbert J."/>
            <person name="Gill R."/>
            <person name="Gloeckner G."/>
            <person name="Gregory S.G."/>
            <person name="Gribble S."/>
            <person name="Griffiths C."/>
            <person name="Grocock R."/>
            <person name="Gu Y."/>
            <person name="Gwilliam R."/>
            <person name="Hamilton C."/>
            <person name="Hart E.A."/>
            <person name="Hawes A."/>
            <person name="Heath P.D."/>
            <person name="Heitmann K."/>
            <person name="Hennig S."/>
            <person name="Hernandez J."/>
            <person name="Hinzmann B."/>
            <person name="Ho S."/>
            <person name="Hoffs M."/>
            <person name="Howden P.J."/>
            <person name="Huckle E.J."/>
            <person name="Hume J."/>
            <person name="Hunt P.J."/>
            <person name="Hunt A.R."/>
            <person name="Isherwood J."/>
            <person name="Jacob L."/>
            <person name="Johnson D."/>
            <person name="Jones S."/>
            <person name="de Jong P.J."/>
            <person name="Joseph S.S."/>
            <person name="Keenan S."/>
            <person name="Kelly S."/>
            <person name="Kershaw J.K."/>
            <person name="Khan Z."/>
            <person name="Kioschis P."/>
            <person name="Klages S."/>
            <person name="Knights A.J."/>
            <person name="Kosiura A."/>
            <person name="Kovar-Smith C."/>
            <person name="Laird G.K."/>
            <person name="Langford C."/>
            <person name="Lawlor S."/>
            <person name="Leversha M."/>
            <person name="Lewis L."/>
            <person name="Liu W."/>
            <person name="Lloyd C."/>
            <person name="Lloyd D.M."/>
            <person name="Loulseged H."/>
            <person name="Loveland J.E."/>
            <person name="Lovell J.D."/>
            <person name="Lozado R."/>
            <person name="Lu J."/>
            <person name="Lyne R."/>
            <person name="Ma J."/>
            <person name="Maheshwari M."/>
            <person name="Matthews L.H."/>
            <person name="McDowall J."/>
            <person name="McLaren S."/>
            <person name="McMurray A."/>
            <person name="Meidl P."/>
            <person name="Meitinger T."/>
            <person name="Milne S."/>
            <person name="Miner G."/>
            <person name="Mistry S.L."/>
            <person name="Morgan M."/>
            <person name="Morris S."/>
            <person name="Mueller I."/>
            <person name="Mullikin J.C."/>
            <person name="Nguyen N."/>
            <person name="Nordsiek G."/>
            <person name="Nyakatura G."/>
            <person name="O'dell C.N."/>
            <person name="Okwuonu G."/>
            <person name="Palmer S."/>
            <person name="Pandian R."/>
            <person name="Parker D."/>
            <person name="Parrish J."/>
            <person name="Pasternak S."/>
            <person name="Patel D."/>
            <person name="Pearce A.V."/>
            <person name="Pearson D.M."/>
            <person name="Pelan S.E."/>
            <person name="Perez L."/>
            <person name="Porter K.M."/>
            <person name="Ramsey Y."/>
            <person name="Reichwald K."/>
            <person name="Rhodes S."/>
            <person name="Ridler K.A."/>
            <person name="Schlessinger D."/>
            <person name="Schueler M.G."/>
            <person name="Sehra H.K."/>
            <person name="Shaw-Smith C."/>
            <person name="Shen H."/>
            <person name="Sheridan E.M."/>
            <person name="Shownkeen R."/>
            <person name="Skuce C.D."/>
            <person name="Smith M.L."/>
            <person name="Sotheran E.C."/>
            <person name="Steingruber H.E."/>
            <person name="Steward C.A."/>
            <person name="Storey R."/>
            <person name="Swann R.M."/>
            <person name="Swarbreck D."/>
            <person name="Tabor P.E."/>
            <person name="Taudien S."/>
            <person name="Taylor T."/>
            <person name="Teague B."/>
            <person name="Thomas K."/>
            <person name="Thorpe A."/>
            <person name="Timms K."/>
            <person name="Tracey A."/>
            <person name="Trevanion S."/>
            <person name="Tromans A.C."/>
            <person name="d'Urso M."/>
            <person name="Verduzco D."/>
            <person name="Villasana D."/>
            <person name="Waldron L."/>
            <person name="Wall M."/>
            <person name="Wang Q."/>
            <person name="Warren J."/>
            <person name="Warry G.L."/>
            <person name="Wei X."/>
            <person name="West A."/>
            <person name="Whitehead S.L."/>
            <person name="Whiteley M.N."/>
            <person name="Wilkinson J.E."/>
            <person name="Willey D.L."/>
            <person name="Williams G."/>
            <person name="Williams L."/>
            <person name="Williamson A."/>
            <person name="Williamson H."/>
            <person name="Wilming L."/>
            <person name="Woodmansey R.L."/>
            <person name="Wray P.W."/>
            <person name="Yen J."/>
            <person name="Zhang J."/>
            <person name="Zhou J."/>
            <person name="Zoghbi H."/>
            <person name="Zorilla S."/>
            <person name="Buck D."/>
            <person name="Reinhardt R."/>
            <person name="Poustka A."/>
            <person name="Rosenthal A."/>
            <person name="Lehrach H."/>
            <person name="Meindl A."/>
            <person name="Minx P.J."/>
            <person name="Hillier L.W."/>
            <person name="Willard H.F."/>
            <person name="Wilson R.K."/>
            <person name="Waterston R.H."/>
            <person name="Rice C.M."/>
            <person name="Vaudin M."/>
            <person name="Coulson A."/>
            <person name="Nelson D.L."/>
            <person name="Weinstock G."/>
            <person name="Sulston J.E."/>
            <person name="Durbin R.M."/>
            <person name="Hubbard T."/>
            <person name="Gibbs R.A."/>
            <person name="Beck S."/>
            <person name="Rogers J."/>
            <person name="Bentley D.R."/>
        </authorList>
    </citation>
    <scope>NUCLEOTIDE SEQUENCE [LARGE SCALE GENOMIC DNA]</scope>
</reference>
<reference key="7">
    <citation type="submission" date="2005-09" db="EMBL/GenBank/DDBJ databases">
        <authorList>
            <person name="Mural R.J."/>
            <person name="Istrail S."/>
            <person name="Sutton G.G."/>
            <person name="Florea L."/>
            <person name="Halpern A.L."/>
            <person name="Mobarry C.M."/>
            <person name="Lippert R."/>
            <person name="Walenz B."/>
            <person name="Shatkay H."/>
            <person name="Dew I."/>
            <person name="Miller J.R."/>
            <person name="Flanigan M.J."/>
            <person name="Edwards N.J."/>
            <person name="Bolanos R."/>
            <person name="Fasulo D."/>
            <person name="Halldorsson B.V."/>
            <person name="Hannenhalli S."/>
            <person name="Turner R."/>
            <person name="Yooseph S."/>
            <person name="Lu F."/>
            <person name="Nusskern D.R."/>
            <person name="Shue B.C."/>
            <person name="Zheng X.H."/>
            <person name="Zhong F."/>
            <person name="Delcher A.L."/>
            <person name="Huson D.H."/>
            <person name="Kravitz S.A."/>
            <person name="Mouchard L."/>
            <person name="Reinert K."/>
            <person name="Remington K.A."/>
            <person name="Clark A.G."/>
            <person name="Waterman M.S."/>
            <person name="Eichler E.E."/>
            <person name="Adams M.D."/>
            <person name="Hunkapiller M.W."/>
            <person name="Myers E.W."/>
            <person name="Venter J.C."/>
        </authorList>
    </citation>
    <scope>NUCLEOTIDE SEQUENCE [LARGE SCALE GENOMIC DNA]</scope>
</reference>
<reference key="8">
    <citation type="journal article" date="2004" name="Genome Res.">
        <title>The status, quality, and expansion of the NIH full-length cDNA project: the Mammalian Gene Collection (MGC).</title>
        <authorList>
            <consortium name="The MGC Project Team"/>
        </authorList>
    </citation>
    <scope>NUCLEOTIDE SEQUENCE [LARGE SCALE MRNA] (ISOFORMS 1 AND 3)</scope>
    <source>
        <tissue>Kidney</tissue>
        <tissue>Testis</tissue>
    </source>
</reference>
<reference key="9">
    <citation type="journal article" date="2003" name="J. Biol. Chem.">
        <title>The COOH terminus of GATE-16, an intra-Golgi transport modulator, is cleaved by the human cysteine protease HsApg4A.</title>
        <authorList>
            <person name="Scherz-Shouval R."/>
            <person name="Sagiv Y."/>
            <person name="Shorer H."/>
            <person name="Elazar Z."/>
        </authorList>
    </citation>
    <scope>FUNCTION IN GABARAPL2 CLEAVAGE</scope>
    <scope>ACTIVITY REGULATION</scope>
</reference>
<reference key="10">
    <citation type="journal article" date="2007" name="EMBO J.">
        <title>Reactive oxygen species are essential for autophagy and specifically regulate the activity of Atg4.</title>
        <authorList>
            <person name="Scherz-Shouval R."/>
            <person name="Shvets E."/>
            <person name="Fass E."/>
            <person name="Shorer H."/>
            <person name="Gil L."/>
            <person name="Elazar Z."/>
        </authorList>
    </citation>
    <scope>FUNCTION</scope>
    <scope>ACTIVITY REGULATION</scope>
    <scope>MUTAGENESIS OF CYS-81</scope>
</reference>
<reference key="11">
    <citation type="journal article" date="2011" name="J. Biol. Chem.">
        <title>Kinetics comparisons of mammalian Atg4 homologues indicate selective preferences toward diverse Atg8 substrates.</title>
        <authorList>
            <person name="Li M."/>
            <person name="Hou Y."/>
            <person name="Wang J."/>
            <person name="Chen X."/>
            <person name="Shao Z.M."/>
            <person name="Yin X.M."/>
        </authorList>
    </citation>
    <scope>FUNCTION</scope>
    <scope>BIOPHYSICOCHEMICAL PROPERTIES</scope>
    <scope>ACTIVITY REGULATION</scope>
</reference>
<reference key="12">
    <citation type="journal article" date="2011" name="J. Biomol. Screen.">
        <title>High-throughput fluorescence assay for small-molecule inhibitors of autophagins/Atg4.</title>
        <authorList>
            <person name="Shu C.W."/>
            <person name="Madiraju C."/>
            <person name="Zhai D."/>
            <person name="Welsh K."/>
            <person name="Diaz P."/>
            <person name="Sergienko E."/>
            <person name="Sano R."/>
            <person name="Reed J.C."/>
        </authorList>
    </citation>
    <scope>FUNCTION</scope>
</reference>
<reference key="13">
    <citation type="journal article" date="2012" name="Autophagy">
        <title>A high-throughput FRET-based assay for determination of Atg4 activity.</title>
        <authorList>
            <person name="Li M."/>
            <person name="Chen X."/>
            <person name="Ye Q.Z."/>
            <person name="Vogt A."/>
            <person name="Yin X.M."/>
        </authorList>
    </citation>
    <scope>FUNCTION</scope>
    <scope>BIOPHYSICOCHEMICAL PROPERTIES</scope>
</reference>
<reference key="14">
    <citation type="journal article" date="2017" name="Autophagy">
        <title>ATG4B contains a C-terminal LIR motif important for binding and efficient cleavage of mammalian orthologs of yeast Atg8.</title>
        <authorList>
            <person name="Skytte Rasmussen M."/>
            <person name="Mouilleron S."/>
            <person name="Kumar Shrestha B."/>
            <person name="Wirth M."/>
            <person name="Lee R."/>
            <person name="Bowitz Larsen K."/>
            <person name="Abudu Princely Y."/>
            <person name="O'Reilly N."/>
            <person name="Sjottem E."/>
            <person name="Tooze S.A."/>
            <person name="Lamark T."/>
            <person name="Johansen T."/>
        </authorList>
    </citation>
    <scope>MOTIF</scope>
    <scope>DOMAIN</scope>
</reference>
<reference key="15">
    <citation type="journal article" date="2018" name="Autophagy">
        <title>Delipidation of mammalian Atg8-family proteins by each of the four ATG4 proteases.</title>
        <authorList>
            <person name="Kauffman K.J."/>
            <person name="Yu S."/>
            <person name="Jin J."/>
            <person name="Mugo B."/>
            <person name="Nguyen N."/>
            <person name="O'Brien A."/>
            <person name="Nag S."/>
            <person name="Lystad A.H."/>
            <person name="Melia T.J."/>
        </authorList>
    </citation>
    <scope>FUNCTION</scope>
    <scope>CATALYTIC ACTIVITY</scope>
</reference>
<reference key="16">
    <citation type="journal article" date="2019" name="J. Biol. Chem.">
        <title>Human ATG4 autophagy proteases counteract attachment of ubiquitin-like LC3/GABARAP proteins to other cellular proteins.</title>
        <authorList>
            <person name="Agrotis A."/>
            <person name="von Chamier L."/>
            <person name="Oliver H."/>
            <person name="Kiso K."/>
            <person name="Singh T."/>
            <person name="Ketteler R."/>
        </authorList>
    </citation>
    <scope>FUNCTION</scope>
</reference>
<reference key="17">
    <citation type="journal article" date="2020" name="J. Biol. Chem.">
        <title>The insufficiency of ATG4A in macroautophagy.</title>
        <authorList>
            <person name="Nguyen N."/>
            <person name="Olivas T.J."/>
            <person name="Mires A."/>
            <person name="Jin J."/>
            <person name="Yu S."/>
            <person name="Luan L."/>
            <person name="Nag S."/>
            <person name="Kauffman K.J."/>
            <person name="Melia T.J."/>
        </authorList>
    </citation>
    <scope>FUNCTION</scope>
    <scope>DOMAIN</scope>
    <scope>MUTAGENESIS OF 390-GLU--VAL-398 AND SER-397</scope>
</reference>
<reference key="18">
    <citation type="journal article" date="2021" name="Mol. Cell">
        <title>ATG4 family proteins drive phagophore growth independently of the LC3/GABARAP lipidation system.</title>
        <authorList>
            <person name="Nguyen T.N."/>
            <person name="Padman B.S."/>
            <person name="Zellner S."/>
            <person name="Khuu G."/>
            <person name="Uoselis L."/>
            <person name="Lam W.K."/>
            <person name="Skulsuppaisarn M."/>
            <person name="Lindblom R.S.J."/>
            <person name="Watts E.M."/>
            <person name="Behrends C."/>
            <person name="Lazarou M."/>
        </authorList>
    </citation>
    <scope>FUNCTION</scope>
    <scope>INTERACTION WITH ATG9A</scope>
</reference>
<reference key="19">
    <citation type="journal article" date="2021" name="Mol. Cell">
        <title>Non-canonical autophagy drives alternative ATG8 conjugation to phosphatidylserine.</title>
        <authorList>
            <person name="Durgan J."/>
            <person name="Lystad A.H."/>
            <person name="Sloan K."/>
            <person name="Carlsson S.R."/>
            <person name="Wilson M.I."/>
            <person name="Marcassa E."/>
            <person name="Ulferts R."/>
            <person name="Webster J."/>
            <person name="Lopez-Clavijo A.F."/>
            <person name="Wakelam M.J."/>
            <person name="Beale R."/>
            <person name="Simonsen A."/>
            <person name="Oxley D."/>
            <person name="Florey O."/>
        </authorList>
    </citation>
    <scope>FUNCTION</scope>
    <scope>CATALYTIC ACTIVITY</scope>
</reference>
<reference key="20">
    <citation type="submission" date="2007-03" db="PDB data bank">
        <title>Human cysteine protease ATG4A.</title>
        <authorList>
            <person name="Walker J.R."/>
            <person name="Davis T."/>
            <person name="Mujib S."/>
            <person name="Butler-Cole C."/>
            <person name="Finerty P.J."/>
            <person name="Weigelt J."/>
            <person name="Sundstrom M."/>
            <person name="Arrowsmith C.H."/>
            <person name="Edwards A.M."/>
            <person name="Bochkarev A."/>
            <person name="Dhe-Paganon S."/>
        </authorList>
    </citation>
    <scope>X-RAY CRYSTALLOGRAPHY (2.10 ANGSTROMS) OF 23-359</scope>
</reference>
<proteinExistence type="evidence at protein level"/>
<protein>
    <recommendedName>
        <fullName evidence="22">Cysteine protease ATG4A</fullName>
        <ecNumber evidence="7 9">3.4.22.-</ecNumber>
    </recommendedName>
    <alternativeName>
        <fullName>AUT-like 2 cysteine endopeptidase</fullName>
    </alternativeName>
    <alternativeName>
        <fullName evidence="16">Autophagy-related cysteine endopeptidase 2</fullName>
        <shortName evidence="16">Autophagin-2</shortName>
    </alternativeName>
    <alternativeName>
        <fullName evidence="17">Autophagy-related protein 4 homolog A</fullName>
        <shortName evidence="19">HsAPG4A</shortName>
        <shortName evidence="17">hAPG4A</shortName>
    </alternativeName>
</protein>
<dbReference type="EC" id="3.4.22.-" evidence="7 9"/>
<dbReference type="EMBL" id="AJ504651">
    <property type="protein sequence ID" value="CAD43218.1"/>
    <property type="molecule type" value="mRNA"/>
</dbReference>
<dbReference type="EMBL" id="AB066214">
    <property type="protein sequence ID" value="BAB83889.1"/>
    <property type="molecule type" value="mRNA"/>
</dbReference>
<dbReference type="EMBL" id="AJ320508">
    <property type="protein sequence ID" value="CAC69076.1"/>
    <property type="molecule type" value="mRNA"/>
</dbReference>
<dbReference type="EMBL" id="AJ320509">
    <property type="protein sequence ID" value="CAC69077.1"/>
    <property type="molecule type" value="mRNA"/>
</dbReference>
<dbReference type="EMBL" id="AK314429">
    <property type="protein sequence ID" value="BAG37044.1"/>
    <property type="molecule type" value="mRNA"/>
</dbReference>
<dbReference type="EMBL" id="AL031177">
    <property type="status" value="NOT_ANNOTATED_CDS"/>
    <property type="molecule type" value="Genomic_DNA"/>
</dbReference>
<dbReference type="EMBL" id="CH471120">
    <property type="protein sequence ID" value="EAX02689.1"/>
    <property type="molecule type" value="Genomic_DNA"/>
</dbReference>
<dbReference type="EMBL" id="CH471120">
    <property type="protein sequence ID" value="EAX02691.1"/>
    <property type="molecule type" value="Genomic_DNA"/>
</dbReference>
<dbReference type="EMBL" id="CH471120">
    <property type="protein sequence ID" value="EAX02693.1"/>
    <property type="molecule type" value="Genomic_DNA"/>
</dbReference>
<dbReference type="EMBL" id="BC041862">
    <property type="protein sequence ID" value="AAH41862.1"/>
    <property type="molecule type" value="mRNA"/>
</dbReference>
<dbReference type="EMBL" id="BC061696">
    <property type="protein sequence ID" value="AAH61696.1"/>
    <property type="molecule type" value="mRNA"/>
</dbReference>
<dbReference type="CCDS" id="CCDS14538.1">
    <molecule id="Q8WYN0-1"/>
</dbReference>
<dbReference type="CCDS" id="CCDS14539.1">
    <molecule id="Q8WYN0-2"/>
</dbReference>
<dbReference type="RefSeq" id="NP_001308216.1">
    <molecule id="Q8WYN0-3"/>
    <property type="nucleotide sequence ID" value="NM_001321287.2"/>
</dbReference>
<dbReference type="RefSeq" id="NP_001308217.1">
    <molecule id="Q8WYN0-3"/>
    <property type="nucleotide sequence ID" value="NM_001321288.2"/>
</dbReference>
<dbReference type="RefSeq" id="NP_001308218.1">
    <property type="nucleotide sequence ID" value="NM_001321289.1"/>
</dbReference>
<dbReference type="RefSeq" id="NP_443168.2">
    <molecule id="Q8WYN0-1"/>
    <property type="nucleotide sequence ID" value="NM_052936.4"/>
</dbReference>
<dbReference type="RefSeq" id="NP_840054.1">
    <molecule id="Q8WYN0-2"/>
    <property type="nucleotide sequence ID" value="NM_178270.4"/>
</dbReference>
<dbReference type="RefSeq" id="NP_840055.1">
    <molecule id="Q8WYN0-3"/>
    <property type="nucleotide sequence ID" value="NM_178271.3"/>
</dbReference>
<dbReference type="RefSeq" id="XP_011529144.1">
    <molecule id="Q8WYN0-3"/>
    <property type="nucleotide sequence ID" value="XM_011530842.2"/>
</dbReference>
<dbReference type="RefSeq" id="XP_047297759.1">
    <molecule id="Q8WYN0-3"/>
    <property type="nucleotide sequence ID" value="XM_047441803.1"/>
</dbReference>
<dbReference type="RefSeq" id="XP_054182400.1">
    <molecule id="Q8WYN0-3"/>
    <property type="nucleotide sequence ID" value="XM_054326425.1"/>
</dbReference>
<dbReference type="RefSeq" id="XP_054182401.1">
    <molecule id="Q8WYN0-3"/>
    <property type="nucleotide sequence ID" value="XM_054326426.1"/>
</dbReference>
<dbReference type="PDB" id="2P82">
    <property type="method" value="X-ray"/>
    <property type="resolution" value="2.10 A"/>
    <property type="chains" value="A/B/C/D=23-359"/>
</dbReference>
<dbReference type="PDBsum" id="2P82"/>
<dbReference type="SMR" id="Q8WYN0"/>
<dbReference type="BioGRID" id="125418">
    <property type="interactions" value="31"/>
</dbReference>
<dbReference type="FunCoup" id="Q8WYN0">
    <property type="interactions" value="722"/>
</dbReference>
<dbReference type="IntAct" id="Q8WYN0">
    <property type="interactions" value="36"/>
</dbReference>
<dbReference type="MINT" id="Q8WYN0"/>
<dbReference type="STRING" id="9606.ENSP00000361306"/>
<dbReference type="BindingDB" id="Q8WYN0"/>
<dbReference type="ChEMBL" id="CHEMBL5169181"/>
<dbReference type="MEROPS" id="C54.002"/>
<dbReference type="iPTMnet" id="Q8WYN0"/>
<dbReference type="PhosphoSitePlus" id="Q8WYN0"/>
<dbReference type="BioMuta" id="ATG4A"/>
<dbReference type="DMDM" id="61211859"/>
<dbReference type="jPOST" id="Q8WYN0"/>
<dbReference type="MassIVE" id="Q8WYN0"/>
<dbReference type="PaxDb" id="9606-ENSP00000361306"/>
<dbReference type="PeptideAtlas" id="Q8WYN0"/>
<dbReference type="ProteomicsDB" id="75173">
    <molecule id="Q8WYN0-1"/>
</dbReference>
<dbReference type="ProteomicsDB" id="75174">
    <molecule id="Q8WYN0-2"/>
</dbReference>
<dbReference type="ProteomicsDB" id="75175">
    <molecule id="Q8WYN0-3"/>
</dbReference>
<dbReference type="ProteomicsDB" id="75176">
    <molecule id="Q8WYN0-5"/>
</dbReference>
<dbReference type="Pumba" id="Q8WYN0"/>
<dbReference type="Antibodypedia" id="29398">
    <property type="antibodies" value="488 antibodies from 38 providers"/>
</dbReference>
<dbReference type="DNASU" id="115201"/>
<dbReference type="Ensembl" id="ENST00000345734.7">
    <molecule id="Q8WYN0-2"/>
    <property type="protein sequence ID" value="ENSP00000298131.5"/>
    <property type="gene ID" value="ENSG00000101844.18"/>
</dbReference>
<dbReference type="Ensembl" id="ENST00000372232.8">
    <molecule id="Q8WYN0-1"/>
    <property type="protein sequence ID" value="ENSP00000361306.3"/>
    <property type="gene ID" value="ENSG00000101844.18"/>
</dbReference>
<dbReference type="GeneID" id="115201"/>
<dbReference type="KEGG" id="hsa:115201"/>
<dbReference type="MANE-Select" id="ENST00000372232.8">
    <property type="protein sequence ID" value="ENSP00000361306.3"/>
    <property type="RefSeq nucleotide sequence ID" value="NM_052936.5"/>
    <property type="RefSeq protein sequence ID" value="NP_443168.2"/>
</dbReference>
<dbReference type="UCSC" id="uc004enr.4">
    <molecule id="Q8WYN0-1"/>
    <property type="organism name" value="human"/>
</dbReference>
<dbReference type="AGR" id="HGNC:16489"/>
<dbReference type="CTD" id="115201"/>
<dbReference type="DisGeNET" id="115201"/>
<dbReference type="GeneCards" id="ATG4A"/>
<dbReference type="HGNC" id="HGNC:16489">
    <property type="gene designation" value="ATG4A"/>
</dbReference>
<dbReference type="HPA" id="ENSG00000101844">
    <property type="expression patterns" value="Low tissue specificity"/>
</dbReference>
<dbReference type="MIM" id="300663">
    <property type="type" value="gene"/>
</dbReference>
<dbReference type="neXtProt" id="NX_Q8WYN0"/>
<dbReference type="OpenTargets" id="ENSG00000101844"/>
<dbReference type="PharmGKB" id="PA25184"/>
<dbReference type="VEuPathDB" id="HostDB:ENSG00000101844"/>
<dbReference type="eggNOG" id="KOG2674">
    <property type="taxonomic scope" value="Eukaryota"/>
</dbReference>
<dbReference type="GeneTree" id="ENSGT00530000063000"/>
<dbReference type="HOGENOM" id="CLU_021259_0_1_1"/>
<dbReference type="InParanoid" id="Q8WYN0"/>
<dbReference type="OMA" id="TGFGCMI"/>
<dbReference type="OrthoDB" id="2960936at2759"/>
<dbReference type="PAN-GO" id="Q8WYN0">
    <property type="GO annotations" value="0 GO annotations based on evolutionary models"/>
</dbReference>
<dbReference type="PhylomeDB" id="Q8WYN0"/>
<dbReference type="TreeFam" id="TF314847"/>
<dbReference type="PathwayCommons" id="Q8WYN0"/>
<dbReference type="Reactome" id="R-HSA-1632852">
    <property type="pathway name" value="Macroautophagy"/>
</dbReference>
<dbReference type="SABIO-RK" id="Q8WYN0"/>
<dbReference type="SignaLink" id="Q8WYN0"/>
<dbReference type="BioGRID-ORCS" id="115201">
    <property type="hits" value="16 hits in 777 CRISPR screens"/>
</dbReference>
<dbReference type="ChiTaRS" id="ATG4A">
    <property type="organism name" value="human"/>
</dbReference>
<dbReference type="EvolutionaryTrace" id="Q8WYN0"/>
<dbReference type="GeneWiki" id="ATG4A"/>
<dbReference type="GenomeRNAi" id="115201"/>
<dbReference type="Pharos" id="Q8WYN0">
    <property type="development level" value="Tbio"/>
</dbReference>
<dbReference type="PRO" id="PR:Q8WYN0"/>
<dbReference type="Proteomes" id="UP000005640">
    <property type="component" value="Chromosome X"/>
</dbReference>
<dbReference type="RNAct" id="Q8WYN0">
    <property type="molecule type" value="protein"/>
</dbReference>
<dbReference type="Bgee" id="ENSG00000101844">
    <property type="expression patterns" value="Expressed in body of pancreas and 190 other cell types or tissues"/>
</dbReference>
<dbReference type="ExpressionAtlas" id="Q8WYN0">
    <property type="expression patterns" value="baseline and differential"/>
</dbReference>
<dbReference type="GO" id="GO:0005737">
    <property type="term" value="C:cytoplasm"/>
    <property type="evidence" value="ECO:0000318"/>
    <property type="project" value="GO_Central"/>
</dbReference>
<dbReference type="GO" id="GO:0004197">
    <property type="term" value="F:cysteine-type endopeptidase activity"/>
    <property type="evidence" value="ECO:0000318"/>
    <property type="project" value="GO_Central"/>
</dbReference>
<dbReference type="GO" id="GO:0008234">
    <property type="term" value="F:cysteine-type peptidase activity"/>
    <property type="evidence" value="ECO:0000314"/>
    <property type="project" value="UniProtKB"/>
</dbReference>
<dbReference type="GO" id="GO:0019786">
    <property type="term" value="F:protein-phosphatidylethanolamide deconjugating activity"/>
    <property type="evidence" value="ECO:0000314"/>
    <property type="project" value="UniProtKB"/>
</dbReference>
<dbReference type="GO" id="GO:0035973">
    <property type="term" value="P:aggrephagy"/>
    <property type="evidence" value="ECO:0000318"/>
    <property type="project" value="GO_Central"/>
</dbReference>
<dbReference type="GO" id="GO:0000045">
    <property type="term" value="P:autophagosome assembly"/>
    <property type="evidence" value="ECO:0000314"/>
    <property type="project" value="UniProt"/>
</dbReference>
<dbReference type="GO" id="GO:0006914">
    <property type="term" value="P:autophagy"/>
    <property type="evidence" value="ECO:0000314"/>
    <property type="project" value="UniProtKB"/>
</dbReference>
<dbReference type="GO" id="GO:0006629">
    <property type="term" value="P:lipid metabolic process"/>
    <property type="evidence" value="ECO:0007669"/>
    <property type="project" value="UniProtKB-KW"/>
</dbReference>
<dbReference type="GO" id="GO:0000423">
    <property type="term" value="P:mitophagy"/>
    <property type="evidence" value="ECO:0000318"/>
    <property type="project" value="GO_Central"/>
</dbReference>
<dbReference type="GO" id="GO:0034727">
    <property type="term" value="P:piecemeal microautophagy of the nucleus"/>
    <property type="evidence" value="ECO:0000318"/>
    <property type="project" value="GO_Central"/>
</dbReference>
<dbReference type="GO" id="GO:0051697">
    <property type="term" value="P:protein delipidation"/>
    <property type="evidence" value="ECO:0000314"/>
    <property type="project" value="UniProtKB"/>
</dbReference>
<dbReference type="GO" id="GO:0016485">
    <property type="term" value="P:protein processing"/>
    <property type="evidence" value="ECO:0000318"/>
    <property type="project" value="GO_Central"/>
</dbReference>
<dbReference type="GO" id="GO:0015031">
    <property type="term" value="P:protein transport"/>
    <property type="evidence" value="ECO:0007669"/>
    <property type="project" value="UniProtKB-KW"/>
</dbReference>
<dbReference type="GO" id="GO:0006508">
    <property type="term" value="P:proteolysis"/>
    <property type="evidence" value="ECO:0000314"/>
    <property type="project" value="UniProtKB"/>
</dbReference>
<dbReference type="InterPro" id="IPR046793">
    <property type="entry name" value="ATG4_LIR"/>
</dbReference>
<dbReference type="InterPro" id="IPR038765">
    <property type="entry name" value="Papain-like_cys_pep_sf"/>
</dbReference>
<dbReference type="InterPro" id="IPR005078">
    <property type="entry name" value="Peptidase_C54"/>
</dbReference>
<dbReference type="InterPro" id="IPR046792">
    <property type="entry name" value="Peptidase_C54_cat"/>
</dbReference>
<dbReference type="PANTHER" id="PTHR22624">
    <property type="entry name" value="CYSTEINE PROTEASE ATG4"/>
    <property type="match status" value="1"/>
</dbReference>
<dbReference type="PANTHER" id="PTHR22624:SF35">
    <property type="entry name" value="CYSTEINE PROTEASE ATG4A"/>
    <property type="match status" value="1"/>
</dbReference>
<dbReference type="Pfam" id="PF20166">
    <property type="entry name" value="ATG4_LIR"/>
    <property type="match status" value="1"/>
</dbReference>
<dbReference type="Pfam" id="PF03416">
    <property type="entry name" value="Peptidase_C54"/>
    <property type="match status" value="1"/>
</dbReference>
<dbReference type="SUPFAM" id="SSF54001">
    <property type="entry name" value="Cysteine proteinases"/>
    <property type="match status" value="1"/>
</dbReference>
<name>ATG4A_HUMAN</name>
<feature type="chain" id="PRO_0000215838" description="Cysteine protease ATG4A">
    <location>
        <begin position="1"/>
        <end position="398"/>
    </location>
</feature>
<feature type="short sequence motif" description="LIR" evidence="10">
    <location>
        <begin position="393"/>
        <end position="396"/>
    </location>
</feature>
<feature type="active site" description="Nucleophile" evidence="2">
    <location>
        <position position="77"/>
    </location>
</feature>
<feature type="active site" evidence="2">
    <location>
        <position position="279"/>
    </location>
</feature>
<feature type="active site" evidence="2">
    <location>
        <position position="281"/>
    </location>
</feature>
<feature type="splice variant" id="VSP_025902" description="In isoform 3." evidence="18">
    <location>
        <begin position="1"/>
        <end position="77"/>
    </location>
</feature>
<feature type="splice variant" id="VSP_030499" description="In isoform 4." evidence="22">
    <location>
        <begin position="41"/>
        <end position="64"/>
    </location>
</feature>
<feature type="splice variant" id="VSP_013025" description="In isoform 2." evidence="21">
    <location>
        <begin position="211"/>
        <end position="272"/>
    </location>
</feature>
<feature type="mutagenesis site" description="Reduces the redox sensitivity and retains activity in presence of H(2)O(2)." evidence="6">
    <original>C</original>
    <variation>A</variation>
    <location>
        <position position="81"/>
    </location>
</feature>
<feature type="mutagenesis site" description="Decreased ability to mediate proteolytic activation and delipidation of ATG8 proteins." evidence="13">
    <location>
        <begin position="390"/>
        <end position="398"/>
    </location>
</feature>
<feature type="mutagenesis site" description="Phospho-mimetic mutant; slightly increased delipidation of ATG8 proteins." evidence="10">
    <original>S</original>
    <variation>D</variation>
    <location>
        <position position="397"/>
    </location>
</feature>
<feature type="sequence conflict" description="In Ref. 8; AAH41862." evidence="22" ref="8">
    <original>I</original>
    <variation>Y</variation>
    <location>
        <position position="49"/>
    </location>
</feature>
<feature type="sequence conflict" description="In Ref. 4; CAC69076/CAC69077." evidence="22" ref="4">
    <original>S</original>
    <variation>T</variation>
    <location>
        <position position="218"/>
    </location>
</feature>
<feature type="strand" evidence="25">
    <location>
        <begin position="28"/>
        <end position="31"/>
    </location>
</feature>
<feature type="strand" evidence="25">
    <location>
        <begin position="34"/>
        <end position="37"/>
    </location>
</feature>
<feature type="turn" evidence="25">
    <location>
        <begin position="38"/>
        <end position="41"/>
    </location>
</feature>
<feature type="helix" evidence="25">
    <location>
        <begin position="42"/>
        <end position="50"/>
    </location>
</feature>
<feature type="strand" evidence="25">
    <location>
        <begin position="57"/>
        <end position="61"/>
    </location>
</feature>
<feature type="turn" evidence="25">
    <location>
        <begin position="64"/>
        <end position="67"/>
    </location>
</feature>
<feature type="turn" evidence="25">
    <location>
        <begin position="73"/>
        <end position="75"/>
    </location>
</feature>
<feature type="helix" evidence="25">
    <location>
        <begin position="77"/>
        <end position="94"/>
    </location>
</feature>
<feature type="helix" evidence="25">
    <location>
        <begin position="110"/>
        <end position="116"/>
    </location>
</feature>
<feature type="strand" evidence="25">
    <location>
        <begin position="119"/>
        <end position="121"/>
    </location>
</feature>
<feature type="helix" evidence="25">
    <location>
        <begin position="128"/>
        <end position="136"/>
    </location>
</feature>
<feature type="turn" evidence="25">
    <location>
        <begin position="137"/>
        <end position="139"/>
    </location>
</feature>
<feature type="helix" evidence="25">
    <location>
        <begin position="148"/>
        <end position="159"/>
    </location>
</feature>
<feature type="turn" evidence="25">
    <location>
        <begin position="163"/>
        <end position="165"/>
    </location>
</feature>
<feature type="strand" evidence="25">
    <location>
        <begin position="168"/>
        <end position="171"/>
    </location>
</feature>
<feature type="strand" evidence="25">
    <location>
        <begin position="176"/>
        <end position="178"/>
    </location>
</feature>
<feature type="helix" evidence="25">
    <location>
        <begin position="179"/>
        <end position="186"/>
    </location>
</feature>
<feature type="strand" evidence="25">
    <location>
        <begin position="223"/>
        <end position="230"/>
    </location>
</feature>
<feature type="strand" evidence="25">
    <location>
        <begin position="233"/>
        <end position="235"/>
    </location>
</feature>
<feature type="helix" evidence="25">
    <location>
        <begin position="238"/>
        <end position="240"/>
    </location>
</feature>
<feature type="helix" evidence="25">
    <location>
        <begin position="241"/>
        <end position="249"/>
    </location>
</feature>
<feature type="strand" evidence="25">
    <location>
        <begin position="253"/>
        <end position="260"/>
    </location>
</feature>
<feature type="strand" evidence="25">
    <location>
        <begin position="263"/>
        <end position="271"/>
    </location>
</feature>
<feature type="strand" evidence="25">
    <location>
        <begin position="274"/>
        <end position="278"/>
    </location>
</feature>
<feature type="strand" evidence="25">
    <location>
        <begin position="282"/>
        <end position="285"/>
    </location>
</feature>
<feature type="helix" evidence="25">
    <location>
        <begin position="298"/>
        <end position="300"/>
    </location>
</feature>
<feature type="strand" evidence="25">
    <location>
        <begin position="307"/>
        <end position="310"/>
    </location>
</feature>
<feature type="helix" evidence="25">
    <location>
        <begin position="311"/>
        <end position="313"/>
    </location>
</feature>
<feature type="strand" evidence="25">
    <location>
        <begin position="316"/>
        <end position="326"/>
    </location>
</feature>
<feature type="helix" evidence="25">
    <location>
        <begin position="327"/>
        <end position="340"/>
    </location>
</feature>
<feature type="turn" evidence="25">
    <location>
        <begin position="341"/>
        <end position="343"/>
    </location>
</feature>
<feature type="strand" evidence="25">
    <location>
        <begin position="344"/>
        <end position="346"/>
    </location>
</feature>
<feature type="strand" evidence="25">
    <location>
        <begin position="348"/>
        <end position="354"/>
    </location>
</feature>